<accession>Q66E06</accession>
<protein>
    <recommendedName>
        <fullName evidence="1">Na(+)-translocating NADH-quinone reductase subunit A</fullName>
        <shortName evidence="1">Na(+)-NQR subunit A</shortName>
        <shortName evidence="1">Na(+)-translocating NQR subunit A</shortName>
        <ecNumber evidence="1">7.2.1.1</ecNumber>
    </recommendedName>
    <alternativeName>
        <fullName evidence="1">NQR complex subunit A</fullName>
    </alternativeName>
    <alternativeName>
        <fullName evidence="1">NQR-1 subunit A</fullName>
    </alternativeName>
</protein>
<keyword id="KW-0406">Ion transport</keyword>
<keyword id="KW-0520">NAD</keyword>
<keyword id="KW-0915">Sodium</keyword>
<keyword id="KW-0739">Sodium transport</keyword>
<keyword id="KW-1278">Translocase</keyword>
<keyword id="KW-0813">Transport</keyword>
<keyword id="KW-0830">Ubiquinone</keyword>
<proteinExistence type="inferred from homology"/>
<evidence type="ECO:0000255" key="1">
    <source>
        <dbReference type="HAMAP-Rule" id="MF_00425"/>
    </source>
</evidence>
<comment type="function">
    <text evidence="1">NQR complex catalyzes the reduction of ubiquinone-1 to ubiquinol by two successive reactions, coupled with the transport of Na(+) ions from the cytoplasm to the periplasm. NqrA to NqrE are probably involved in the second step, the conversion of ubisemiquinone to ubiquinol.</text>
</comment>
<comment type="catalytic activity">
    <reaction evidence="1">
        <text>a ubiquinone + n Na(+)(in) + NADH + H(+) = a ubiquinol + n Na(+)(out) + NAD(+)</text>
        <dbReference type="Rhea" id="RHEA:47748"/>
        <dbReference type="Rhea" id="RHEA-COMP:9565"/>
        <dbReference type="Rhea" id="RHEA-COMP:9566"/>
        <dbReference type="ChEBI" id="CHEBI:15378"/>
        <dbReference type="ChEBI" id="CHEBI:16389"/>
        <dbReference type="ChEBI" id="CHEBI:17976"/>
        <dbReference type="ChEBI" id="CHEBI:29101"/>
        <dbReference type="ChEBI" id="CHEBI:57540"/>
        <dbReference type="ChEBI" id="CHEBI:57945"/>
        <dbReference type="EC" id="7.2.1.1"/>
    </reaction>
</comment>
<comment type="subunit">
    <text evidence="1">Composed of six subunits; NqrA, NqrB, NqrC, NqrD, NqrE and NqrF.</text>
</comment>
<comment type="similarity">
    <text evidence="1">Belongs to the NqrA family.</text>
</comment>
<name>NQRA_YERPS</name>
<dbReference type="EC" id="7.2.1.1" evidence="1"/>
<dbReference type="EMBL" id="BX936398">
    <property type="protein sequence ID" value="CAH20127.1"/>
    <property type="molecule type" value="Genomic_DNA"/>
</dbReference>
<dbReference type="RefSeq" id="WP_002208717.1">
    <property type="nucleotide sequence ID" value="NZ_CP009712.1"/>
</dbReference>
<dbReference type="SMR" id="Q66E06"/>
<dbReference type="KEGG" id="ypo:BZ17_1659"/>
<dbReference type="KEGG" id="yps:YPTB0887"/>
<dbReference type="PATRIC" id="fig|273123.14.peg.1764"/>
<dbReference type="Proteomes" id="UP000001011">
    <property type="component" value="Chromosome"/>
</dbReference>
<dbReference type="GO" id="GO:0016655">
    <property type="term" value="F:oxidoreductase activity, acting on NAD(P)H, quinone or similar compound as acceptor"/>
    <property type="evidence" value="ECO:0007669"/>
    <property type="project" value="UniProtKB-UniRule"/>
</dbReference>
<dbReference type="GO" id="GO:0006814">
    <property type="term" value="P:sodium ion transport"/>
    <property type="evidence" value="ECO:0007669"/>
    <property type="project" value="UniProtKB-UniRule"/>
</dbReference>
<dbReference type="HAMAP" id="MF_00425">
    <property type="entry name" value="NqrA"/>
    <property type="match status" value="1"/>
</dbReference>
<dbReference type="InterPro" id="IPR008703">
    <property type="entry name" value="NqrA"/>
</dbReference>
<dbReference type="InterPro" id="IPR056148">
    <property type="entry name" value="NQRA_2nd"/>
</dbReference>
<dbReference type="InterPro" id="IPR022615">
    <property type="entry name" value="NqrA_C_domain"/>
</dbReference>
<dbReference type="InterPro" id="IPR056147">
    <property type="entry name" value="NQRA_N"/>
</dbReference>
<dbReference type="NCBIfam" id="TIGR01936">
    <property type="entry name" value="nqrA"/>
    <property type="match status" value="1"/>
</dbReference>
<dbReference type="NCBIfam" id="NF003759">
    <property type="entry name" value="PRK05352.1-2"/>
    <property type="match status" value="1"/>
</dbReference>
<dbReference type="NCBIfam" id="NF003761">
    <property type="entry name" value="PRK05352.1-4"/>
    <property type="match status" value="1"/>
</dbReference>
<dbReference type="PANTHER" id="PTHR37839">
    <property type="entry name" value="NA(+)-TRANSLOCATING NADH-QUINONE REDUCTASE SUBUNIT A"/>
    <property type="match status" value="1"/>
</dbReference>
<dbReference type="PANTHER" id="PTHR37839:SF1">
    <property type="entry name" value="NA(+)-TRANSLOCATING NADH-QUINONE REDUCTASE SUBUNIT A"/>
    <property type="match status" value="1"/>
</dbReference>
<dbReference type="Pfam" id="PF24836">
    <property type="entry name" value="NQRA_2nd"/>
    <property type="match status" value="1"/>
</dbReference>
<dbReference type="Pfam" id="PF05896">
    <property type="entry name" value="NQRA_N"/>
    <property type="match status" value="1"/>
</dbReference>
<dbReference type="Pfam" id="PF11973">
    <property type="entry name" value="NQRA_SLBB"/>
    <property type="match status" value="1"/>
</dbReference>
<gene>
    <name evidence="1" type="primary">nqrA</name>
    <name type="ordered locus">YPTB0887</name>
</gene>
<sequence length="447" mass="49016">MIKIKKGLDLPIAGAPVQTIQDGPAIHHVALLGEEYVGMRPSMLVQEGDQVKKGQALFEDKKNPGVLFTAPASGKISAINRGERRVLQSVVIEVEGDEQIPFEHYAAEELNQLSDEQVQHHLLTSGLWTALRTRPFSKTPVPGSRPRAIFISAMDTQPLAADPQVIIATESEAFNHGLTVLTRLTDGKVHVCHAAGQAVTRHTNTQVTYNEFSGPHPAGLVGTHIHFLEPVSQTKMVWHVGYQDVIAIGKLFTRGELCTDRIVALAGPQVNQPILLRTRLGASLSELTAGKLKEGDNRIISGSVLSGTAFSATHGYLGRFHQQVSVIREGREKELFGWVMPGRDKYSITRTTLGHFFKRKLFAFSTDMHGGERAMVPIGNYERVMPLDILATHLLRDLLAGDTDSAQALGCLELDEEDLALCTFVCPGKYEYGPVLRDILTQIEQEG</sequence>
<organism>
    <name type="scientific">Yersinia pseudotuberculosis serotype I (strain IP32953)</name>
    <dbReference type="NCBI Taxonomy" id="273123"/>
    <lineage>
        <taxon>Bacteria</taxon>
        <taxon>Pseudomonadati</taxon>
        <taxon>Pseudomonadota</taxon>
        <taxon>Gammaproteobacteria</taxon>
        <taxon>Enterobacterales</taxon>
        <taxon>Yersiniaceae</taxon>
        <taxon>Yersinia</taxon>
    </lineage>
</organism>
<feature type="chain" id="PRO_1000060133" description="Na(+)-translocating NADH-quinone reductase subunit A">
    <location>
        <begin position="1"/>
        <end position="447"/>
    </location>
</feature>
<reference key="1">
    <citation type="journal article" date="2004" name="Proc. Natl. Acad. Sci. U.S.A.">
        <title>Insights into the evolution of Yersinia pestis through whole-genome comparison with Yersinia pseudotuberculosis.</title>
        <authorList>
            <person name="Chain P.S.G."/>
            <person name="Carniel E."/>
            <person name="Larimer F.W."/>
            <person name="Lamerdin J."/>
            <person name="Stoutland P.O."/>
            <person name="Regala W.M."/>
            <person name="Georgescu A.M."/>
            <person name="Vergez L.M."/>
            <person name="Land M.L."/>
            <person name="Motin V.L."/>
            <person name="Brubaker R.R."/>
            <person name="Fowler J."/>
            <person name="Hinnebusch J."/>
            <person name="Marceau M."/>
            <person name="Medigue C."/>
            <person name="Simonet M."/>
            <person name="Chenal-Francisque V."/>
            <person name="Souza B."/>
            <person name="Dacheux D."/>
            <person name="Elliott J.M."/>
            <person name="Derbise A."/>
            <person name="Hauser L.J."/>
            <person name="Garcia E."/>
        </authorList>
    </citation>
    <scope>NUCLEOTIDE SEQUENCE [LARGE SCALE GENOMIC DNA]</scope>
    <source>
        <strain>IP32953</strain>
    </source>
</reference>